<comment type="function">
    <text evidence="1">Binds the lower part of the 30S subunit head. Binds mRNA in the 70S ribosome, positioning it for translation.</text>
</comment>
<comment type="subunit">
    <text evidence="1">Part of the 30S ribosomal subunit. Forms a tight complex with proteins S10 and S14.</text>
</comment>
<comment type="similarity">
    <text evidence="1">Belongs to the universal ribosomal protein uS3 family.</text>
</comment>
<proteinExistence type="inferred from homology"/>
<gene>
    <name evidence="1" type="primary">rpsC</name>
    <name type="ordered locus">TC_0809</name>
</gene>
<organism>
    <name type="scientific">Chlamydia muridarum (strain MoPn / Nigg)</name>
    <dbReference type="NCBI Taxonomy" id="243161"/>
    <lineage>
        <taxon>Bacteria</taxon>
        <taxon>Pseudomonadati</taxon>
        <taxon>Chlamydiota</taxon>
        <taxon>Chlamydiia</taxon>
        <taxon>Chlamydiales</taxon>
        <taxon>Chlamydiaceae</taxon>
        <taxon>Chlamydia/Chlamydophila group</taxon>
        <taxon>Chlamydia</taxon>
    </lineage>
</organism>
<sequence length="224" mass="24371">MGQKGCPVGFRTAVTKKWRSLWYGNNQEFGKFLIEDVRIREFLKKKPSCQGAAGFVVKRMSGKIEVTIHTARPGLVIGKKGAEVESLKAELKKLTGKDVWVEIAEVKRPELNAQLVADGIAKQIERRVSFRRAMKKALQSVMDAGALGVKVQVSGRLAGAEIARSEWYKNGRVPLHTLRADIDYATASAETTYGIIGIKVWINLGEKKAVPAANHAGAASTAAA</sequence>
<dbReference type="EMBL" id="AE002160">
    <property type="protein sequence ID" value="AAF39612.1"/>
    <property type="molecule type" value="Genomic_DNA"/>
</dbReference>
<dbReference type="PIR" id="A81665">
    <property type="entry name" value="A81665"/>
</dbReference>
<dbReference type="RefSeq" id="WP_010231636.1">
    <property type="nucleotide sequence ID" value="NZ_CP063055.1"/>
</dbReference>
<dbReference type="SMR" id="Q9PJM0"/>
<dbReference type="GeneID" id="1246176"/>
<dbReference type="KEGG" id="cmu:TC_0809"/>
<dbReference type="eggNOG" id="COG0092">
    <property type="taxonomic scope" value="Bacteria"/>
</dbReference>
<dbReference type="HOGENOM" id="CLU_058591_0_2_0"/>
<dbReference type="OrthoDB" id="9806396at2"/>
<dbReference type="Proteomes" id="UP000000800">
    <property type="component" value="Chromosome"/>
</dbReference>
<dbReference type="GO" id="GO:0022627">
    <property type="term" value="C:cytosolic small ribosomal subunit"/>
    <property type="evidence" value="ECO:0007669"/>
    <property type="project" value="TreeGrafter"/>
</dbReference>
<dbReference type="GO" id="GO:0003729">
    <property type="term" value="F:mRNA binding"/>
    <property type="evidence" value="ECO:0007669"/>
    <property type="project" value="UniProtKB-UniRule"/>
</dbReference>
<dbReference type="GO" id="GO:0019843">
    <property type="term" value="F:rRNA binding"/>
    <property type="evidence" value="ECO:0007669"/>
    <property type="project" value="UniProtKB-UniRule"/>
</dbReference>
<dbReference type="GO" id="GO:0003735">
    <property type="term" value="F:structural constituent of ribosome"/>
    <property type="evidence" value="ECO:0007669"/>
    <property type="project" value="InterPro"/>
</dbReference>
<dbReference type="GO" id="GO:0006412">
    <property type="term" value="P:translation"/>
    <property type="evidence" value="ECO:0007669"/>
    <property type="project" value="UniProtKB-UniRule"/>
</dbReference>
<dbReference type="CDD" id="cd02412">
    <property type="entry name" value="KH-II_30S_S3"/>
    <property type="match status" value="1"/>
</dbReference>
<dbReference type="FunFam" id="3.30.300.20:FF:000001">
    <property type="entry name" value="30S ribosomal protein S3"/>
    <property type="match status" value="1"/>
</dbReference>
<dbReference type="Gene3D" id="3.30.300.20">
    <property type="match status" value="1"/>
</dbReference>
<dbReference type="Gene3D" id="3.30.1140.32">
    <property type="entry name" value="Ribosomal protein S3, C-terminal domain"/>
    <property type="match status" value="1"/>
</dbReference>
<dbReference type="HAMAP" id="MF_01309_B">
    <property type="entry name" value="Ribosomal_uS3_B"/>
    <property type="match status" value="1"/>
</dbReference>
<dbReference type="InterPro" id="IPR004087">
    <property type="entry name" value="KH_dom"/>
</dbReference>
<dbReference type="InterPro" id="IPR015946">
    <property type="entry name" value="KH_dom-like_a/b"/>
</dbReference>
<dbReference type="InterPro" id="IPR004044">
    <property type="entry name" value="KH_dom_type_2"/>
</dbReference>
<dbReference type="InterPro" id="IPR009019">
    <property type="entry name" value="KH_sf_prok-type"/>
</dbReference>
<dbReference type="InterPro" id="IPR036419">
    <property type="entry name" value="Ribosomal_S3_C_sf"/>
</dbReference>
<dbReference type="InterPro" id="IPR005704">
    <property type="entry name" value="Ribosomal_uS3_bac-typ"/>
</dbReference>
<dbReference type="InterPro" id="IPR001351">
    <property type="entry name" value="Ribosomal_uS3_C"/>
</dbReference>
<dbReference type="InterPro" id="IPR018280">
    <property type="entry name" value="Ribosomal_uS3_CS"/>
</dbReference>
<dbReference type="NCBIfam" id="TIGR01009">
    <property type="entry name" value="rpsC_bact"/>
    <property type="match status" value="1"/>
</dbReference>
<dbReference type="PANTHER" id="PTHR11760">
    <property type="entry name" value="30S/40S RIBOSOMAL PROTEIN S3"/>
    <property type="match status" value="1"/>
</dbReference>
<dbReference type="PANTHER" id="PTHR11760:SF19">
    <property type="entry name" value="SMALL RIBOSOMAL SUBUNIT PROTEIN US3C"/>
    <property type="match status" value="1"/>
</dbReference>
<dbReference type="Pfam" id="PF07650">
    <property type="entry name" value="KH_2"/>
    <property type="match status" value="1"/>
</dbReference>
<dbReference type="Pfam" id="PF00189">
    <property type="entry name" value="Ribosomal_S3_C"/>
    <property type="match status" value="1"/>
</dbReference>
<dbReference type="SMART" id="SM00322">
    <property type="entry name" value="KH"/>
    <property type="match status" value="1"/>
</dbReference>
<dbReference type="SUPFAM" id="SSF54814">
    <property type="entry name" value="Prokaryotic type KH domain (KH-domain type II)"/>
    <property type="match status" value="1"/>
</dbReference>
<dbReference type="SUPFAM" id="SSF54821">
    <property type="entry name" value="Ribosomal protein S3 C-terminal domain"/>
    <property type="match status" value="1"/>
</dbReference>
<dbReference type="PROSITE" id="PS50823">
    <property type="entry name" value="KH_TYPE_2"/>
    <property type="match status" value="1"/>
</dbReference>
<dbReference type="PROSITE" id="PS00548">
    <property type="entry name" value="RIBOSOMAL_S3"/>
    <property type="match status" value="1"/>
</dbReference>
<accession>Q9PJM0</accession>
<keyword id="KW-0687">Ribonucleoprotein</keyword>
<keyword id="KW-0689">Ribosomal protein</keyword>
<keyword id="KW-0694">RNA-binding</keyword>
<keyword id="KW-0699">rRNA-binding</keyword>
<evidence type="ECO:0000255" key="1">
    <source>
        <dbReference type="HAMAP-Rule" id="MF_01309"/>
    </source>
</evidence>
<evidence type="ECO:0000305" key="2"/>
<name>RS3_CHLMU</name>
<reference key="1">
    <citation type="journal article" date="2000" name="Nucleic Acids Res.">
        <title>Genome sequences of Chlamydia trachomatis MoPn and Chlamydia pneumoniae AR39.</title>
        <authorList>
            <person name="Read T.D."/>
            <person name="Brunham R.C."/>
            <person name="Shen C."/>
            <person name="Gill S.R."/>
            <person name="Heidelberg J.F."/>
            <person name="White O."/>
            <person name="Hickey E.K."/>
            <person name="Peterson J.D."/>
            <person name="Utterback T.R."/>
            <person name="Berry K.J."/>
            <person name="Bass S."/>
            <person name="Linher K.D."/>
            <person name="Weidman J.F."/>
            <person name="Khouri H.M."/>
            <person name="Craven B."/>
            <person name="Bowman C."/>
            <person name="Dodson R.J."/>
            <person name="Gwinn M.L."/>
            <person name="Nelson W.C."/>
            <person name="DeBoy R.T."/>
            <person name="Kolonay J.F."/>
            <person name="McClarty G."/>
            <person name="Salzberg S.L."/>
            <person name="Eisen J.A."/>
            <person name="Fraser C.M."/>
        </authorList>
    </citation>
    <scope>NUCLEOTIDE SEQUENCE [LARGE SCALE GENOMIC DNA]</scope>
    <source>
        <strain>MoPn / Nigg</strain>
    </source>
</reference>
<protein>
    <recommendedName>
        <fullName evidence="1">Small ribosomal subunit protein uS3</fullName>
    </recommendedName>
    <alternativeName>
        <fullName evidence="2">30S ribosomal protein S3</fullName>
    </alternativeName>
</protein>
<feature type="chain" id="PRO_0000130098" description="Small ribosomal subunit protein uS3">
    <location>
        <begin position="1"/>
        <end position="224"/>
    </location>
</feature>
<feature type="domain" description="KH type-2" evidence="1">
    <location>
        <begin position="39"/>
        <end position="107"/>
    </location>
</feature>